<gene>
    <name evidence="1" type="primary">glyA</name>
    <name type="ordered locus">Ppha_0727</name>
</gene>
<proteinExistence type="inferred from homology"/>
<name>GLYA_PELPB</name>
<comment type="function">
    <text evidence="1">Catalyzes the reversible interconversion of serine and glycine with tetrahydrofolate (THF) serving as the one-carbon carrier. This reaction serves as the major source of one-carbon groups required for the biosynthesis of purines, thymidylate, methionine, and other important biomolecules. Also exhibits THF-independent aldolase activity toward beta-hydroxyamino acids, producing glycine and aldehydes, via a retro-aldol mechanism.</text>
</comment>
<comment type="catalytic activity">
    <reaction evidence="1">
        <text>(6R)-5,10-methylene-5,6,7,8-tetrahydrofolate + glycine + H2O = (6S)-5,6,7,8-tetrahydrofolate + L-serine</text>
        <dbReference type="Rhea" id="RHEA:15481"/>
        <dbReference type="ChEBI" id="CHEBI:15377"/>
        <dbReference type="ChEBI" id="CHEBI:15636"/>
        <dbReference type="ChEBI" id="CHEBI:33384"/>
        <dbReference type="ChEBI" id="CHEBI:57305"/>
        <dbReference type="ChEBI" id="CHEBI:57453"/>
        <dbReference type="EC" id="2.1.2.1"/>
    </reaction>
</comment>
<comment type="cofactor">
    <cofactor evidence="1">
        <name>pyridoxal 5'-phosphate</name>
        <dbReference type="ChEBI" id="CHEBI:597326"/>
    </cofactor>
</comment>
<comment type="pathway">
    <text evidence="1">One-carbon metabolism; tetrahydrofolate interconversion.</text>
</comment>
<comment type="pathway">
    <text evidence="1">Amino-acid biosynthesis; glycine biosynthesis; glycine from L-serine: step 1/1.</text>
</comment>
<comment type="subunit">
    <text evidence="1">Homodimer.</text>
</comment>
<comment type="subcellular location">
    <subcellularLocation>
        <location evidence="1">Cytoplasm</location>
    </subcellularLocation>
</comment>
<comment type="similarity">
    <text evidence="1">Belongs to the SHMT family.</text>
</comment>
<dbReference type="EC" id="2.1.2.1" evidence="1"/>
<dbReference type="EMBL" id="CP001110">
    <property type="protein sequence ID" value="ACF43022.1"/>
    <property type="molecule type" value="Genomic_DNA"/>
</dbReference>
<dbReference type="RefSeq" id="WP_012507517.1">
    <property type="nucleotide sequence ID" value="NC_011060.1"/>
</dbReference>
<dbReference type="SMR" id="B4SE31"/>
<dbReference type="STRING" id="324925.Ppha_0727"/>
<dbReference type="KEGG" id="pph:Ppha_0727"/>
<dbReference type="eggNOG" id="COG0112">
    <property type="taxonomic scope" value="Bacteria"/>
</dbReference>
<dbReference type="HOGENOM" id="CLU_022477_2_1_10"/>
<dbReference type="OrthoDB" id="9803846at2"/>
<dbReference type="UniPathway" id="UPA00193"/>
<dbReference type="UniPathway" id="UPA00288">
    <property type="reaction ID" value="UER01023"/>
</dbReference>
<dbReference type="Proteomes" id="UP000002724">
    <property type="component" value="Chromosome"/>
</dbReference>
<dbReference type="GO" id="GO:0005829">
    <property type="term" value="C:cytosol"/>
    <property type="evidence" value="ECO:0007669"/>
    <property type="project" value="TreeGrafter"/>
</dbReference>
<dbReference type="GO" id="GO:0004372">
    <property type="term" value="F:glycine hydroxymethyltransferase activity"/>
    <property type="evidence" value="ECO:0007669"/>
    <property type="project" value="UniProtKB-UniRule"/>
</dbReference>
<dbReference type="GO" id="GO:0030170">
    <property type="term" value="F:pyridoxal phosphate binding"/>
    <property type="evidence" value="ECO:0007669"/>
    <property type="project" value="UniProtKB-UniRule"/>
</dbReference>
<dbReference type="GO" id="GO:0019264">
    <property type="term" value="P:glycine biosynthetic process from serine"/>
    <property type="evidence" value="ECO:0007669"/>
    <property type="project" value="UniProtKB-UniRule"/>
</dbReference>
<dbReference type="GO" id="GO:0035999">
    <property type="term" value="P:tetrahydrofolate interconversion"/>
    <property type="evidence" value="ECO:0007669"/>
    <property type="project" value="UniProtKB-UniRule"/>
</dbReference>
<dbReference type="CDD" id="cd00378">
    <property type="entry name" value="SHMT"/>
    <property type="match status" value="1"/>
</dbReference>
<dbReference type="FunFam" id="3.40.640.10:FF:000001">
    <property type="entry name" value="Serine hydroxymethyltransferase"/>
    <property type="match status" value="1"/>
</dbReference>
<dbReference type="Gene3D" id="3.90.1150.10">
    <property type="entry name" value="Aspartate Aminotransferase, domain 1"/>
    <property type="match status" value="1"/>
</dbReference>
<dbReference type="Gene3D" id="3.40.640.10">
    <property type="entry name" value="Type I PLP-dependent aspartate aminotransferase-like (Major domain)"/>
    <property type="match status" value="1"/>
</dbReference>
<dbReference type="HAMAP" id="MF_00051">
    <property type="entry name" value="SHMT"/>
    <property type="match status" value="1"/>
</dbReference>
<dbReference type="InterPro" id="IPR015424">
    <property type="entry name" value="PyrdxlP-dep_Trfase"/>
</dbReference>
<dbReference type="InterPro" id="IPR015421">
    <property type="entry name" value="PyrdxlP-dep_Trfase_major"/>
</dbReference>
<dbReference type="InterPro" id="IPR015422">
    <property type="entry name" value="PyrdxlP-dep_Trfase_small"/>
</dbReference>
<dbReference type="InterPro" id="IPR001085">
    <property type="entry name" value="Ser_HO-MeTrfase"/>
</dbReference>
<dbReference type="InterPro" id="IPR049943">
    <property type="entry name" value="Ser_HO-MeTrfase-like"/>
</dbReference>
<dbReference type="InterPro" id="IPR019798">
    <property type="entry name" value="Ser_HO-MeTrfase_PLP_BS"/>
</dbReference>
<dbReference type="InterPro" id="IPR039429">
    <property type="entry name" value="SHMT-like_dom"/>
</dbReference>
<dbReference type="NCBIfam" id="NF000586">
    <property type="entry name" value="PRK00011.1"/>
    <property type="match status" value="1"/>
</dbReference>
<dbReference type="PANTHER" id="PTHR11680">
    <property type="entry name" value="SERINE HYDROXYMETHYLTRANSFERASE"/>
    <property type="match status" value="1"/>
</dbReference>
<dbReference type="PANTHER" id="PTHR11680:SF35">
    <property type="entry name" value="SERINE HYDROXYMETHYLTRANSFERASE 1"/>
    <property type="match status" value="1"/>
</dbReference>
<dbReference type="Pfam" id="PF00464">
    <property type="entry name" value="SHMT"/>
    <property type="match status" value="1"/>
</dbReference>
<dbReference type="PIRSF" id="PIRSF000412">
    <property type="entry name" value="SHMT"/>
    <property type="match status" value="1"/>
</dbReference>
<dbReference type="SUPFAM" id="SSF53383">
    <property type="entry name" value="PLP-dependent transferases"/>
    <property type="match status" value="1"/>
</dbReference>
<dbReference type="PROSITE" id="PS00096">
    <property type="entry name" value="SHMT"/>
    <property type="match status" value="1"/>
</dbReference>
<organism>
    <name type="scientific">Pelodictyon phaeoclathratiforme (strain DSM 5477 / BU-1)</name>
    <dbReference type="NCBI Taxonomy" id="324925"/>
    <lineage>
        <taxon>Bacteria</taxon>
        <taxon>Pseudomonadati</taxon>
        <taxon>Chlorobiota</taxon>
        <taxon>Chlorobiia</taxon>
        <taxon>Chlorobiales</taxon>
        <taxon>Chlorobiaceae</taxon>
        <taxon>Chlorobium/Pelodictyon group</taxon>
        <taxon>Pelodictyon</taxon>
    </lineage>
</organism>
<keyword id="KW-0028">Amino-acid biosynthesis</keyword>
<keyword id="KW-0963">Cytoplasm</keyword>
<keyword id="KW-0554">One-carbon metabolism</keyword>
<keyword id="KW-0663">Pyridoxal phosphate</keyword>
<keyword id="KW-1185">Reference proteome</keyword>
<keyword id="KW-0808">Transferase</keyword>
<accession>B4SE31</accession>
<evidence type="ECO:0000255" key="1">
    <source>
        <dbReference type="HAMAP-Rule" id="MF_00051"/>
    </source>
</evidence>
<reference key="1">
    <citation type="submission" date="2008-06" db="EMBL/GenBank/DDBJ databases">
        <title>Complete sequence of Pelodictyon phaeoclathratiforme BU-1.</title>
        <authorList>
            <consortium name="US DOE Joint Genome Institute"/>
            <person name="Lucas S."/>
            <person name="Copeland A."/>
            <person name="Lapidus A."/>
            <person name="Glavina del Rio T."/>
            <person name="Dalin E."/>
            <person name="Tice H."/>
            <person name="Bruce D."/>
            <person name="Goodwin L."/>
            <person name="Pitluck S."/>
            <person name="Schmutz J."/>
            <person name="Larimer F."/>
            <person name="Land M."/>
            <person name="Hauser L."/>
            <person name="Kyrpides N."/>
            <person name="Mikhailova N."/>
            <person name="Liu Z."/>
            <person name="Li T."/>
            <person name="Zhao F."/>
            <person name="Overmann J."/>
            <person name="Bryant D.A."/>
            <person name="Richardson P."/>
        </authorList>
    </citation>
    <scope>NUCLEOTIDE SEQUENCE [LARGE SCALE GENOMIC DNA]</scope>
    <source>
        <strain>DSM 5477 / BU-1</strain>
    </source>
</reference>
<feature type="chain" id="PRO_1000091565" description="Serine hydroxymethyltransferase">
    <location>
        <begin position="1"/>
        <end position="438"/>
    </location>
</feature>
<feature type="binding site" evidence="1">
    <location>
        <position position="119"/>
    </location>
    <ligand>
        <name>(6S)-5,6,7,8-tetrahydrofolate</name>
        <dbReference type="ChEBI" id="CHEBI:57453"/>
    </ligand>
</feature>
<feature type="binding site" evidence="1">
    <location>
        <begin position="123"/>
        <end position="125"/>
    </location>
    <ligand>
        <name>(6S)-5,6,7,8-tetrahydrofolate</name>
        <dbReference type="ChEBI" id="CHEBI:57453"/>
    </ligand>
</feature>
<feature type="binding site" evidence="1">
    <location>
        <begin position="370"/>
        <end position="372"/>
    </location>
    <ligand>
        <name>(6S)-5,6,7,8-tetrahydrofolate</name>
        <dbReference type="ChEBI" id="CHEBI:57453"/>
    </ligand>
</feature>
<feature type="site" description="Plays an important role in substrate specificity" evidence="1">
    <location>
        <position position="227"/>
    </location>
</feature>
<feature type="modified residue" description="N6-(pyridoxal phosphate)lysine" evidence="1">
    <location>
        <position position="228"/>
    </location>
</feature>
<protein>
    <recommendedName>
        <fullName evidence="1">Serine hydroxymethyltransferase</fullName>
        <shortName evidence="1">SHMT</shortName>
        <shortName evidence="1">Serine methylase</shortName>
        <ecNumber evidence="1">2.1.2.1</ecNumber>
    </recommendedName>
</protein>
<sequence>MDTDILQKQDSELFEAIAKETGRQTETLELIASENFTSRAVMQACGSVMTNKYAEGYPGKRYYGGCEFVDIAENLARDRAKKLFGCDYVNVQPHSGSSANMAVLFSVLKPGDRIMGLDLSHGGHLTHGSSVNFSGQMYEAHSYGVDRETGCIDMNKVEELALQVRPKLIICGASAYSQGFDVKAFRVIADKVGAFLMADIAHPAGLIAAGLLGNPLPHCHFVTTTTHKTLRGPRGGMIMMGSDFENPMGITIKTKTGSRLKMMSEVMDAEVMPGIQGGPLMHIIAGKAVAFGEALQPAFRDYAAQVIKNAAAMAEKFTELGYKIVSGGTKNHLMLLDLRSKNVTGKVAENLLHSAGITVNKNMVPFDDKSPFVTSGIRVGTPAMTTRGMNEADSVLIAELIDRVITSAEKPDVADLCRSVREEIKALCLRNPIDGYTV</sequence>